<sequence>MKFIIKLFPEITIKSQSVRLRFIKILTGNIRNVLKHYDETLAVVRHWDNIEVRAKDENQRLAIRDALTRIPGIHHILEVEDVPFTDMHDIFEKALVQYRDQLEGKTFCVRVKRRGKHDFSSIDVERYVGGGLNQHIESARVKLTNPDVTVHLEVEDDRLLLIKGRYEGIGGFPIGTQEDVLSLISGGFDSGVSSYMLMRRGCRVHYCFFNLGGAAHEIGVRQVAHYLWNRFGSSHRVRFVAINFEPVVGEILEKIDDGQMGVILKRMMVRAASKVAERYGVQALVTGEALGQVSSQTLTNLRLIDNVSDTLILRPLISYDKEHIINLARQIGTEDFARTMPEYCGVISKSPTVKAVKSKIEAEEEKFDFSILDKVVEEANNVDIREIAQQTEQEVVEVETVNGFGPNDVILDIRSIDEQEDKPLKVEGIDVVSLPFYKLSTKFGDLDQNKTWLLWCERGVMSRLQALYLREQGFNNVKVYRP</sequence>
<accession>P77718</accession>
<accession>Q2MC03</accession>
<protein>
    <recommendedName>
        <fullName>tRNA sulfurtransferase</fullName>
        <ecNumber>2.8.1.4</ecNumber>
    </recommendedName>
    <alternativeName>
        <fullName>Sulfur carrier protein ThiS sulfurtransferase</fullName>
    </alternativeName>
    <alternativeName>
        <fullName>Thiamine biosynthesis protein ThiI</fullName>
    </alternativeName>
    <alternativeName>
        <fullName>tRNA 4-thiouridine synthase</fullName>
    </alternativeName>
</protein>
<keyword id="KW-0067">ATP-binding</keyword>
<keyword id="KW-0963">Cytoplasm</keyword>
<keyword id="KW-1015">Disulfide bond</keyword>
<keyword id="KW-0547">Nucleotide-binding</keyword>
<keyword id="KW-0676">Redox-active center</keyword>
<keyword id="KW-1185">Reference proteome</keyword>
<keyword id="KW-0694">RNA-binding</keyword>
<keyword id="KW-0784">Thiamine biosynthesis</keyword>
<keyword id="KW-0808">Transferase</keyword>
<keyword id="KW-0820">tRNA-binding</keyword>
<organism>
    <name type="scientific">Escherichia coli (strain K12)</name>
    <dbReference type="NCBI Taxonomy" id="83333"/>
    <lineage>
        <taxon>Bacteria</taxon>
        <taxon>Pseudomonadati</taxon>
        <taxon>Pseudomonadota</taxon>
        <taxon>Gammaproteobacteria</taxon>
        <taxon>Enterobacterales</taxon>
        <taxon>Enterobacteriaceae</taxon>
        <taxon>Escherichia</taxon>
    </lineage>
</organism>
<gene>
    <name type="primary">thiI</name>
    <name type="synonym">yajK</name>
    <name type="ordered locus">b0423</name>
    <name type="ordered locus">JW0413</name>
</gene>
<comment type="function">
    <text evidence="3 4 7">Catalyzes the ATP-dependent transfer of a sulfur to tRNA to produce 4-thiouridine in position 8 of tRNAs, which functions as a near-UV photosensor. Also catalyzes the transfer of sulfur to the sulfur carrier protein ThiS, forming ThiS-thiocarboxylate. This is a step in the synthesis of thiazole, in the thiamine biosynthesis pathway. The sulfur is donated as persulfide by IscS.</text>
</comment>
<comment type="catalytic activity">
    <reaction evidence="4">
        <text>[ThiI sulfur-carrier protein]-S-sulfanyl-L-cysteine + a uridine in tRNA + 2 reduced [2Fe-2S]-[ferredoxin] + ATP + H(+) = [ThiI sulfur-carrier protein]-L-cysteine + a 4-thiouridine in tRNA + 2 oxidized [2Fe-2S]-[ferredoxin] + AMP + diphosphate</text>
        <dbReference type="Rhea" id="RHEA:24176"/>
        <dbReference type="Rhea" id="RHEA-COMP:10000"/>
        <dbReference type="Rhea" id="RHEA-COMP:10001"/>
        <dbReference type="Rhea" id="RHEA-COMP:13337"/>
        <dbReference type="Rhea" id="RHEA-COMP:13338"/>
        <dbReference type="Rhea" id="RHEA-COMP:13339"/>
        <dbReference type="Rhea" id="RHEA-COMP:13340"/>
        <dbReference type="ChEBI" id="CHEBI:15378"/>
        <dbReference type="ChEBI" id="CHEBI:29950"/>
        <dbReference type="ChEBI" id="CHEBI:30616"/>
        <dbReference type="ChEBI" id="CHEBI:33019"/>
        <dbReference type="ChEBI" id="CHEBI:33737"/>
        <dbReference type="ChEBI" id="CHEBI:33738"/>
        <dbReference type="ChEBI" id="CHEBI:61963"/>
        <dbReference type="ChEBI" id="CHEBI:65315"/>
        <dbReference type="ChEBI" id="CHEBI:136798"/>
        <dbReference type="ChEBI" id="CHEBI:456215"/>
        <dbReference type="EC" id="2.8.1.4"/>
    </reaction>
</comment>
<comment type="catalytic activity">
    <reaction evidence="4">
        <text>[ThiS sulfur-carrier protein]-C-terminal Gly-Gly-AMP + S-sulfanyl-L-cysteinyl-[cysteine desulfurase] + AH2 = [ThiS sulfur-carrier protein]-C-terminal-Gly-aminoethanethioate + L-cysteinyl-[cysteine desulfurase] + A + AMP + 2 H(+)</text>
        <dbReference type="Rhea" id="RHEA:43340"/>
        <dbReference type="Rhea" id="RHEA-COMP:12157"/>
        <dbReference type="Rhea" id="RHEA-COMP:12158"/>
        <dbReference type="Rhea" id="RHEA-COMP:12910"/>
        <dbReference type="Rhea" id="RHEA-COMP:19908"/>
        <dbReference type="ChEBI" id="CHEBI:13193"/>
        <dbReference type="ChEBI" id="CHEBI:15378"/>
        <dbReference type="ChEBI" id="CHEBI:17499"/>
        <dbReference type="ChEBI" id="CHEBI:29950"/>
        <dbReference type="ChEBI" id="CHEBI:61963"/>
        <dbReference type="ChEBI" id="CHEBI:90618"/>
        <dbReference type="ChEBI" id="CHEBI:232372"/>
        <dbReference type="ChEBI" id="CHEBI:456215"/>
    </reaction>
</comment>
<comment type="biophysicochemical properties">
    <kinetics>
        <KM evidence="7">0.24 mM for ATP</KM>
        <KM evidence="7">0.84 mM for GTP</KM>
        <Vmax evidence="7">1.9 nmol/min/mg enzyme with ATP as cosubstrate</Vmax>
        <Vmax evidence="7">1.29 nmol/min/mg enzyme with GTP as cosubstrate</Vmax>
    </kinetics>
</comment>
<comment type="pathway">
    <text>Cofactor biosynthesis; thiamine diphosphate biosynthesis.</text>
</comment>
<comment type="subcellular location">
    <subcellularLocation>
        <location>Cytoplasm</location>
    </subcellularLocation>
</comment>
<comment type="similarity">
    <text evidence="8">Belongs to the ThiI family.</text>
</comment>
<evidence type="ECO:0000250" key="1"/>
<evidence type="ECO:0000269" key="2">
    <source>
    </source>
</evidence>
<evidence type="ECO:0000269" key="3">
    <source>
    </source>
</evidence>
<evidence type="ECO:0000269" key="4">
    <source>
    </source>
</evidence>
<evidence type="ECO:0000269" key="5">
    <source>
    </source>
</evidence>
<evidence type="ECO:0000269" key="6">
    <source>
    </source>
</evidence>
<evidence type="ECO:0000269" key="7">
    <source>
    </source>
</evidence>
<evidence type="ECO:0000305" key="8"/>
<proteinExistence type="evidence at protein level"/>
<reference key="1">
    <citation type="submission" date="1997-01" db="EMBL/GenBank/DDBJ databases">
        <title>Sequence of minutes 4-25 of Escherichia coli.</title>
        <authorList>
            <person name="Chung E."/>
            <person name="Allen E."/>
            <person name="Araujo R."/>
            <person name="Aparicio A.M."/>
            <person name="Davis K."/>
            <person name="Duncan M."/>
            <person name="Federspiel N."/>
            <person name="Hyman R."/>
            <person name="Kalman S."/>
            <person name="Komp C."/>
            <person name="Kurdi O."/>
            <person name="Lew H."/>
            <person name="Lin D."/>
            <person name="Namath A."/>
            <person name="Oefner P."/>
            <person name="Roberts D."/>
            <person name="Schramm S."/>
            <person name="Davis R.W."/>
        </authorList>
    </citation>
    <scope>NUCLEOTIDE SEQUENCE [LARGE SCALE GENOMIC DNA]</scope>
    <source>
        <strain>K12 / MG1655 / ATCC 47076</strain>
    </source>
</reference>
<reference key="2">
    <citation type="journal article" date="1997" name="Science">
        <title>The complete genome sequence of Escherichia coli K-12.</title>
        <authorList>
            <person name="Blattner F.R."/>
            <person name="Plunkett G. III"/>
            <person name="Bloch C.A."/>
            <person name="Perna N.T."/>
            <person name="Burland V."/>
            <person name="Riley M."/>
            <person name="Collado-Vides J."/>
            <person name="Glasner J.D."/>
            <person name="Rode C.K."/>
            <person name="Mayhew G.F."/>
            <person name="Gregor J."/>
            <person name="Davis N.W."/>
            <person name="Kirkpatrick H.A."/>
            <person name="Goeden M.A."/>
            <person name="Rose D.J."/>
            <person name="Mau B."/>
            <person name="Shao Y."/>
        </authorList>
    </citation>
    <scope>NUCLEOTIDE SEQUENCE [LARGE SCALE GENOMIC DNA]</scope>
    <source>
        <strain>K12 / MG1655 / ATCC 47076</strain>
    </source>
</reference>
<reference key="3">
    <citation type="journal article" date="2006" name="Mol. Syst. Biol.">
        <title>Highly accurate genome sequences of Escherichia coli K-12 strains MG1655 and W3110.</title>
        <authorList>
            <person name="Hayashi K."/>
            <person name="Morooka N."/>
            <person name="Yamamoto Y."/>
            <person name="Fujita K."/>
            <person name="Isono K."/>
            <person name="Choi S."/>
            <person name="Ohtsubo E."/>
            <person name="Baba T."/>
            <person name="Wanner B.L."/>
            <person name="Mori H."/>
            <person name="Horiuchi T."/>
        </authorList>
    </citation>
    <scope>NUCLEOTIDE SEQUENCE [LARGE SCALE GENOMIC DNA]</scope>
    <source>
        <strain>K12 / W3110 / ATCC 27325 / DSM 5911</strain>
    </source>
</reference>
<reference key="4">
    <citation type="thesis" date="1996" institute="Cornell University" country="United States">
        <title>The biosynthesis of thiamin in Escherichia coli K-12: structural genes for thiamin biosynthetic enzymes (thiCEFGH and thiJ) and function of the thiE gene product (thiamin phosphate synthase [E.C. 2.5.1.3]).</title>
        <authorList>
            <person name="Backstrom A.D."/>
        </authorList>
    </citation>
    <scope>NUCLEOTIDE SEQUENCE [GENOMIC DNA] OF 253-482</scope>
    <source>
        <strain>K12</strain>
    </source>
</reference>
<reference key="5">
    <citation type="journal article" date="1998" name="J. Biol. Chem.">
        <title>Thiamin biosynthesis in Escherichia coli. Identification of ThiS thiocarboxylate as the immediate sulfur donor in the thiazole formation.</title>
        <authorList>
            <person name="Taylor S.V."/>
            <person name="Kelleher N.L."/>
            <person name="Kinsland C."/>
            <person name="Chiu H.-J."/>
            <person name="Costello C.A."/>
            <person name="Backstrom A.D."/>
            <person name="McLafferty F.W."/>
            <person name="Begley T.P."/>
        </authorList>
    </citation>
    <scope>INVOLVEMENT IN THIAMINE BIOSYNTHESIS</scope>
    <source>
        <strain>B/r / ATCC 12407</strain>
    </source>
</reference>
<reference key="6">
    <citation type="journal article" date="1998" name="Nucleic Acids Res.">
        <title>Identification of a gene involved in the generation of 4-thiouridine in tRNA.</title>
        <authorList>
            <person name="Mueller E.G."/>
            <person name="Buck C.J."/>
            <person name="Palenchar P.M."/>
            <person name="Barnhart L.E."/>
            <person name="Paulson J.L."/>
        </authorList>
    </citation>
    <scope>INVOLVEMENT IN THE GENERATION OF 4-THIOURIDINE IN TRNA</scope>
    <source>
        <strain>RK4353</strain>
    </source>
</reference>
<reference key="7">
    <citation type="journal article" date="1999" name="Protein Sci.">
        <title>Using genomic information to investigate the function of ThiI, an enzyme shared between thiamin and 4-thiouridine biosynthesis.</title>
        <authorList>
            <person name="Mueller E.G."/>
            <person name="Palenchar P.M."/>
        </authorList>
    </citation>
    <scope>MUTAGENESIS OF ASP-189 AND LYS-321</scope>
</reference>
<reference key="8">
    <citation type="journal article" date="2000" name="J. Biol. Chem.">
        <title>Evidence that ThiI, an enzyme shared between thiamin and 4-thiouridine biosynthesis, may be a sulfurtransferase that proceeds through a persulfide intermediate.</title>
        <authorList>
            <person name="Palenchar P.M."/>
            <person name="Buck C.J."/>
            <person name="Cheng H."/>
            <person name="Larson T.J."/>
            <person name="Mueller E.G."/>
        </authorList>
    </citation>
    <scope>FUNCTION</scope>
    <scope>MUTAGENESIS OF CYS-456</scope>
</reference>
<reference key="9">
    <citation type="journal article" date="2000" name="J. Biol. Chem.">
        <title>Evidence for the transfer of sulfane sulfur from IscS to ThiI during the in vitro biosynthesis of 4-thiouridine in Escherichia coli tRNA.</title>
        <authorList>
            <person name="Kambampati R."/>
            <person name="Lauhon C.T."/>
        </authorList>
    </citation>
    <scope>FUNCTION IN 4-THIOURIDINE FORMATION IN TRNA</scope>
    <scope>CATALYTIC ACTIVITY</scope>
    <scope>ATP DEPENDENCE</scope>
</reference>
<reference key="10">
    <citation type="journal article" date="2001" name="J. Biol. Chem.">
        <title>The role of the cysteine residues of ThiI in the generation of 4-thiouridine in tRNA.</title>
        <authorList>
            <person name="Mueller E.G."/>
            <person name="Palenchar P.M."/>
            <person name="Buck C.J."/>
        </authorList>
    </citation>
    <scope>MUTAGENESIS OF CYS-108; CYS-202; CYS-207 AND CYS-344</scope>
    <scope>FORMATION OF DISULFIDE BOND DURING ENZYME CATALYSIS</scope>
    <scope>REACTION MECHANISM</scope>
</reference>
<reference key="11">
    <citation type="journal article" date="2002" name="Chem. Commun. (Camb.)">
        <title>A paradigm for biological sulfur transfers via persulfide groups: a persulfide-disulfide-thiol cycle in 4-thiouridine biosynthesis.</title>
        <authorList>
            <person name="Wright C.M."/>
            <person name="Palenchar P.M."/>
            <person name="Mueller E.G."/>
        </authorList>
    </citation>
    <scope>REACTION MECHANISM</scope>
</reference>
<reference key="12">
    <citation type="journal article" date="2006" name="Chem. Commun. (Camb.)">
        <title>Direct evidence for enzyme persulfide and disulfide intermediates during 4-thiouridine biosynthesis.</title>
        <authorList>
            <person name="Wright C.M."/>
            <person name="Christman G.D."/>
            <person name="Snellinger A.M."/>
            <person name="Johnston M.V."/>
            <person name="Mueller E.G."/>
        </authorList>
    </citation>
    <scope>CYSTEINE PERSULFIDE INTERMEDIATE</scope>
    <scope>DISULFIDE BOND FORMATION</scope>
    <scope>REACTION MECHANISM</scope>
    <scope>IDENTIFICATION BY MASS SPECTROMETRY</scope>
</reference>
<reference key="13">
    <citation type="journal article" date="2008" name="ChemBioChem">
        <title>Direct evidence that ThiI is an ATP pyrophosphatase for the adenylation of uridine in 4-thiouridine biosynthesis.</title>
        <authorList>
            <person name="You D."/>
            <person name="Xu T."/>
            <person name="Yao F."/>
            <person name="Zhou X."/>
            <person name="Deng Z."/>
        </authorList>
    </citation>
    <scope>FUNCTION AS PYROPHOSPHATASE</scope>
    <scope>BIOPHYSICOCHEMICAL PROPERTIES</scope>
    <scope>IDENTIFICATION BY MASS SPECTROMETRY</scope>
</reference>
<name>THII_ECOLI</name>
<feature type="chain" id="PRO_0000154837" description="tRNA sulfurtransferase">
    <location>
        <begin position="1"/>
        <end position="482"/>
    </location>
</feature>
<feature type="domain" description="THUMP">
    <location>
        <begin position="61"/>
        <end position="165"/>
    </location>
</feature>
<feature type="domain" description="Rhodanese">
    <location>
        <begin position="404"/>
        <end position="482"/>
    </location>
</feature>
<feature type="active site" description="Cysteine persulfide intermediate">
    <location>
        <position position="456"/>
    </location>
</feature>
<feature type="binding site" evidence="1">
    <location>
        <begin position="183"/>
        <end position="184"/>
    </location>
    <ligand>
        <name>ATP</name>
        <dbReference type="ChEBI" id="CHEBI:30616"/>
    </ligand>
</feature>
<feature type="binding site" evidence="1">
    <location>
        <position position="265"/>
    </location>
    <ligand>
        <name>ATP</name>
        <dbReference type="ChEBI" id="CHEBI:30616"/>
    </ligand>
</feature>
<feature type="binding site" evidence="1">
    <location>
        <position position="287"/>
    </location>
    <ligand>
        <name>ATP</name>
        <dbReference type="ChEBI" id="CHEBI:30616"/>
    </ligand>
</feature>
<feature type="binding site" evidence="1">
    <location>
        <position position="296"/>
    </location>
    <ligand>
        <name>ATP</name>
        <dbReference type="ChEBI" id="CHEBI:30616"/>
    </ligand>
</feature>
<feature type="disulfide bond" description="Redox-active" evidence="6">
    <location>
        <begin position="344"/>
        <end position="456"/>
    </location>
</feature>
<feature type="mutagenesis site" description="No effect." evidence="5">
    <original>C</original>
    <variation>A</variation>
    <location>
        <position position="108"/>
    </location>
</feature>
<feature type="mutagenesis site" description="No activity." evidence="2">
    <original>D</original>
    <variation>A</variation>
    <location>
        <position position="189"/>
    </location>
</feature>
<feature type="mutagenesis site" description="No effect." evidence="5">
    <original>C</original>
    <variation>A</variation>
    <location>
        <position position="202"/>
    </location>
</feature>
<feature type="mutagenesis site" description="Enables partial functional complementation in vivo. Four-fold reduction in activity." evidence="5">
    <original>C</original>
    <variation>A</variation>
    <location>
        <position position="207"/>
    </location>
</feature>
<feature type="mutagenesis site" description="No activity." evidence="2">
    <original>K</original>
    <variation>M</variation>
    <location>
        <position position="321"/>
    </location>
</feature>
<feature type="mutagenesis site" description="Approximately half of wild-type activity." evidence="2">
    <original>K</original>
    <variation>R</variation>
    <location>
        <position position="321"/>
    </location>
</feature>
<feature type="mutagenesis site" description="Cannot functionally complement for wild-type enzyme in vivo. 2700-fold reduction in activity." evidence="5">
    <original>C</original>
    <variation>A</variation>
    <location>
        <position position="344"/>
    </location>
</feature>
<feature type="mutagenesis site" description="No activity." evidence="3">
    <original>C</original>
    <variation>A</variation>
    <location>
        <position position="456"/>
    </location>
</feature>
<dbReference type="EC" id="2.8.1.4"/>
<dbReference type="EMBL" id="U82664">
    <property type="protein sequence ID" value="AAB40179.1"/>
    <property type="molecule type" value="Genomic_DNA"/>
</dbReference>
<dbReference type="EMBL" id="U00096">
    <property type="protein sequence ID" value="AAC73526.1"/>
    <property type="molecule type" value="Genomic_DNA"/>
</dbReference>
<dbReference type="EMBL" id="AP009048">
    <property type="protein sequence ID" value="BAE76203.1"/>
    <property type="molecule type" value="Genomic_DNA"/>
</dbReference>
<dbReference type="EMBL" id="U34923">
    <property type="status" value="NOT_ANNOTATED_CDS"/>
    <property type="molecule type" value="Genomic_DNA"/>
</dbReference>
<dbReference type="PIR" id="G64771">
    <property type="entry name" value="G64771"/>
</dbReference>
<dbReference type="RefSeq" id="NP_414957.1">
    <property type="nucleotide sequence ID" value="NC_000913.3"/>
</dbReference>
<dbReference type="RefSeq" id="WP_000668662.1">
    <property type="nucleotide sequence ID" value="NZ_SSUW01000008.1"/>
</dbReference>
<dbReference type="SMR" id="P77718"/>
<dbReference type="BioGRID" id="4263344">
    <property type="interactions" value="17"/>
</dbReference>
<dbReference type="ComplexPortal" id="CPX-2140">
    <property type="entry name" value="iscS-thiI sulfurtransferase complex"/>
</dbReference>
<dbReference type="DIP" id="DIP-10985N"/>
<dbReference type="FunCoup" id="P77718">
    <property type="interactions" value="331"/>
</dbReference>
<dbReference type="IntAct" id="P77718">
    <property type="interactions" value="13"/>
</dbReference>
<dbReference type="STRING" id="511145.b0423"/>
<dbReference type="jPOST" id="P77718"/>
<dbReference type="PaxDb" id="511145-b0423"/>
<dbReference type="EnsemblBacteria" id="AAC73526">
    <property type="protein sequence ID" value="AAC73526"/>
    <property type="gene ID" value="b0423"/>
</dbReference>
<dbReference type="GeneID" id="945067"/>
<dbReference type="KEGG" id="ecj:JW0413"/>
<dbReference type="KEGG" id="eco:b0423"/>
<dbReference type="KEGG" id="ecoc:C3026_02065"/>
<dbReference type="PATRIC" id="fig|1411691.4.peg.1854"/>
<dbReference type="EchoBASE" id="EB3058"/>
<dbReference type="eggNOG" id="COG0301">
    <property type="taxonomic scope" value="Bacteria"/>
</dbReference>
<dbReference type="eggNOG" id="COG0607">
    <property type="taxonomic scope" value="Bacteria"/>
</dbReference>
<dbReference type="HOGENOM" id="CLU_037952_4_1_6"/>
<dbReference type="InParanoid" id="P77718"/>
<dbReference type="OMA" id="SMPEFCG"/>
<dbReference type="OrthoDB" id="9773948at2"/>
<dbReference type="PhylomeDB" id="P77718"/>
<dbReference type="BioCyc" id="EcoCyc:THII-MONOMER"/>
<dbReference type="BioCyc" id="MetaCyc:THII-MONOMER"/>
<dbReference type="SABIO-RK" id="P77718"/>
<dbReference type="UniPathway" id="UPA00060"/>
<dbReference type="PRO" id="PR:P77718"/>
<dbReference type="Proteomes" id="UP000000625">
    <property type="component" value="Chromosome"/>
</dbReference>
<dbReference type="GO" id="GO:0005829">
    <property type="term" value="C:cytosol"/>
    <property type="evidence" value="ECO:0000314"/>
    <property type="project" value="EcoCyc"/>
</dbReference>
<dbReference type="GO" id="GO:1990221">
    <property type="term" value="C:L-cysteine desulfurase complex"/>
    <property type="evidence" value="ECO:0000353"/>
    <property type="project" value="ComplexPortal"/>
</dbReference>
<dbReference type="GO" id="GO:1990228">
    <property type="term" value="C:sulfurtransferase complex"/>
    <property type="evidence" value="ECO:0000353"/>
    <property type="project" value="ComplexPortal"/>
</dbReference>
<dbReference type="GO" id="GO:0005524">
    <property type="term" value="F:ATP binding"/>
    <property type="evidence" value="ECO:0007669"/>
    <property type="project" value="UniProtKB-UniRule"/>
</dbReference>
<dbReference type="GO" id="GO:0004810">
    <property type="term" value="F:CCA tRNA nucleotidyltransferase activity"/>
    <property type="evidence" value="ECO:0007669"/>
    <property type="project" value="InterPro"/>
</dbReference>
<dbReference type="GO" id="GO:0097163">
    <property type="term" value="F:sulfur carrier activity"/>
    <property type="evidence" value="ECO:0000314"/>
    <property type="project" value="EcoCyc"/>
</dbReference>
<dbReference type="GO" id="GO:0016783">
    <property type="term" value="F:sulfurtransferase activity"/>
    <property type="evidence" value="ECO:0000314"/>
    <property type="project" value="EcoCyc"/>
</dbReference>
<dbReference type="GO" id="GO:0000049">
    <property type="term" value="F:tRNA binding"/>
    <property type="evidence" value="ECO:0007669"/>
    <property type="project" value="UniProtKB-UniRule"/>
</dbReference>
<dbReference type="GO" id="GO:0140741">
    <property type="term" value="F:tRNA-uracil-4 sulfurtransferase activity"/>
    <property type="evidence" value="ECO:0007669"/>
    <property type="project" value="UniProtKB-EC"/>
</dbReference>
<dbReference type="GO" id="GO:0009589">
    <property type="term" value="P:detection of UV"/>
    <property type="evidence" value="ECO:0000303"/>
    <property type="project" value="ComplexPortal"/>
</dbReference>
<dbReference type="GO" id="GO:0019448">
    <property type="term" value="P:L-cysteine catabolic process"/>
    <property type="evidence" value="ECO:0000314"/>
    <property type="project" value="ComplexPortal"/>
</dbReference>
<dbReference type="GO" id="GO:0009228">
    <property type="term" value="P:thiamine biosynthetic process"/>
    <property type="evidence" value="ECO:0000315"/>
    <property type="project" value="EcoCyc"/>
</dbReference>
<dbReference type="GO" id="GO:0009229">
    <property type="term" value="P:thiamine diphosphate biosynthetic process"/>
    <property type="evidence" value="ECO:0007669"/>
    <property type="project" value="UniProtKB-UniRule"/>
</dbReference>
<dbReference type="GO" id="GO:0052837">
    <property type="term" value="P:thiazole biosynthetic process"/>
    <property type="evidence" value="ECO:0000318"/>
    <property type="project" value="GO_Central"/>
</dbReference>
<dbReference type="GO" id="GO:0002937">
    <property type="term" value="P:tRNA 4-thiouridine biosynthesis"/>
    <property type="evidence" value="ECO:0000315"/>
    <property type="project" value="EcoCyc"/>
</dbReference>
<dbReference type="CDD" id="cd01712">
    <property type="entry name" value="PPase_ThiI"/>
    <property type="match status" value="1"/>
</dbReference>
<dbReference type="CDD" id="cd00158">
    <property type="entry name" value="RHOD"/>
    <property type="match status" value="1"/>
</dbReference>
<dbReference type="CDD" id="cd11716">
    <property type="entry name" value="THUMP_ThiI"/>
    <property type="match status" value="1"/>
</dbReference>
<dbReference type="FunFam" id="3.30.2130.30:FF:000002">
    <property type="entry name" value="tRNA sulfurtransferase"/>
    <property type="match status" value="1"/>
</dbReference>
<dbReference type="FunFam" id="3.40.250.10:FF:000003">
    <property type="entry name" value="tRNA sulfurtransferase"/>
    <property type="match status" value="1"/>
</dbReference>
<dbReference type="FunFam" id="3.40.50.620:FF:000029">
    <property type="entry name" value="tRNA sulfurtransferase"/>
    <property type="match status" value="1"/>
</dbReference>
<dbReference type="Gene3D" id="3.30.2130.30">
    <property type="match status" value="1"/>
</dbReference>
<dbReference type="Gene3D" id="3.40.50.620">
    <property type="entry name" value="HUPs"/>
    <property type="match status" value="1"/>
</dbReference>
<dbReference type="Gene3D" id="3.40.250.10">
    <property type="entry name" value="Rhodanese-like domain"/>
    <property type="match status" value="1"/>
</dbReference>
<dbReference type="HAMAP" id="MF_00021">
    <property type="entry name" value="ThiI"/>
    <property type="match status" value="1"/>
</dbReference>
<dbReference type="InterPro" id="IPR001763">
    <property type="entry name" value="Rhodanese-like_dom"/>
</dbReference>
<dbReference type="InterPro" id="IPR036873">
    <property type="entry name" value="Rhodanese-like_dom_sf"/>
</dbReference>
<dbReference type="InterPro" id="IPR014729">
    <property type="entry name" value="Rossmann-like_a/b/a_fold"/>
</dbReference>
<dbReference type="InterPro" id="IPR020536">
    <property type="entry name" value="ThiI_AANH"/>
</dbReference>
<dbReference type="InterPro" id="IPR054173">
    <property type="entry name" value="ThiI_fer"/>
</dbReference>
<dbReference type="InterPro" id="IPR049961">
    <property type="entry name" value="ThiI_N"/>
</dbReference>
<dbReference type="InterPro" id="IPR026340">
    <property type="entry name" value="THII_Thiazole_biosynth_dom"/>
</dbReference>
<dbReference type="InterPro" id="IPR004114">
    <property type="entry name" value="THUMP_dom"/>
</dbReference>
<dbReference type="InterPro" id="IPR049962">
    <property type="entry name" value="THUMP_ThiI"/>
</dbReference>
<dbReference type="InterPro" id="IPR003720">
    <property type="entry name" value="tRNA_STrfase"/>
</dbReference>
<dbReference type="InterPro" id="IPR050102">
    <property type="entry name" value="tRNA_sulfurtransferase_ThiI"/>
</dbReference>
<dbReference type="NCBIfam" id="TIGR04271">
    <property type="entry name" value="ThiI_C_thiazole"/>
    <property type="match status" value="1"/>
</dbReference>
<dbReference type="NCBIfam" id="TIGR00342">
    <property type="entry name" value="tRNA uracil 4-sulfurtransferase ThiI"/>
    <property type="match status" value="1"/>
</dbReference>
<dbReference type="PANTHER" id="PTHR43209">
    <property type="entry name" value="TRNA SULFURTRANSFERASE"/>
    <property type="match status" value="1"/>
</dbReference>
<dbReference type="PANTHER" id="PTHR43209:SF1">
    <property type="entry name" value="TRNA SULFURTRANSFERASE"/>
    <property type="match status" value="1"/>
</dbReference>
<dbReference type="Pfam" id="PF02568">
    <property type="entry name" value="ThiI"/>
    <property type="match status" value="1"/>
</dbReference>
<dbReference type="Pfam" id="PF22025">
    <property type="entry name" value="ThiI_fer"/>
    <property type="match status" value="1"/>
</dbReference>
<dbReference type="Pfam" id="PF02926">
    <property type="entry name" value="THUMP"/>
    <property type="match status" value="1"/>
</dbReference>
<dbReference type="SMART" id="SM00981">
    <property type="entry name" value="THUMP"/>
    <property type="match status" value="1"/>
</dbReference>
<dbReference type="SUPFAM" id="SSF52402">
    <property type="entry name" value="Adenine nucleotide alpha hydrolases-like"/>
    <property type="match status" value="1"/>
</dbReference>
<dbReference type="SUPFAM" id="SSF52821">
    <property type="entry name" value="Rhodanese/Cell cycle control phosphatase"/>
    <property type="match status" value="1"/>
</dbReference>
<dbReference type="SUPFAM" id="SSF143437">
    <property type="entry name" value="THUMP domain-like"/>
    <property type="match status" value="1"/>
</dbReference>
<dbReference type="PROSITE" id="PS50206">
    <property type="entry name" value="RHODANESE_3"/>
    <property type="match status" value="1"/>
</dbReference>
<dbReference type="PROSITE" id="PS51165">
    <property type="entry name" value="THUMP"/>
    <property type="match status" value="1"/>
</dbReference>